<evidence type="ECO:0000250" key="1"/>
<evidence type="ECO:0000255" key="2">
    <source>
        <dbReference type="PROSITE-ProRule" id="PRU00783"/>
    </source>
</evidence>
<evidence type="ECO:0000305" key="3"/>
<reference key="1">
    <citation type="journal article" date="2008" name="Antimicrob. Agents Chemother.">
        <title>Mutated response regulator graR is responsible for phenotypic conversion of Staphylococcus aureus from heterogeneous vancomycin-intermediate resistance to vancomycin-intermediate resistance.</title>
        <authorList>
            <person name="Neoh H.-M."/>
            <person name="Cui L."/>
            <person name="Yuzawa H."/>
            <person name="Takeuchi F."/>
            <person name="Matsuo M."/>
            <person name="Hiramatsu K."/>
        </authorList>
    </citation>
    <scope>NUCLEOTIDE SEQUENCE [LARGE SCALE GENOMIC DNA]</scope>
    <source>
        <strain>Mu3 / ATCC 700698</strain>
    </source>
</reference>
<gene>
    <name type="ordered locus">SAHV_0723</name>
</gene>
<organism>
    <name type="scientific">Staphylococcus aureus (strain Mu3 / ATCC 700698)</name>
    <dbReference type="NCBI Taxonomy" id="418127"/>
    <lineage>
        <taxon>Bacteria</taxon>
        <taxon>Bacillati</taxon>
        <taxon>Bacillota</taxon>
        <taxon>Bacilli</taxon>
        <taxon>Bacillales</taxon>
        <taxon>Staphylococcaceae</taxon>
        <taxon>Staphylococcus</taxon>
    </lineage>
</organism>
<keyword id="KW-0067">ATP-binding</keyword>
<keyword id="KW-0418">Kinase</keyword>
<keyword id="KW-0444">Lipid biosynthesis</keyword>
<keyword id="KW-0443">Lipid metabolism</keyword>
<keyword id="KW-0460">Magnesium</keyword>
<keyword id="KW-0479">Metal-binding</keyword>
<keyword id="KW-0547">Nucleotide-binding</keyword>
<keyword id="KW-0594">Phospholipid biosynthesis</keyword>
<keyword id="KW-1208">Phospholipid metabolism</keyword>
<keyword id="KW-0808">Transferase</keyword>
<sequence length="305" mass="33612">MENKYTHGVLFYHEHSGLKNINQGIGEVTTALSSICKHLSIQLSENEGDIIKYCQEIKTKNYAKDVDILFILGGDGTVNELINGVMSHDLQLPIGILPGGTFNDFTKTLNIAPNHKQASEQMISAQVGTYDVIKINNQYALNFVGLGLIVQNAENVQDGSKDIFGKLSYIGSTVKTLLNPTQFNYQLSIDDKTYSGETTMILTANGPFIGGSRIPLTDLSPQDGELNTFIFNEQSFSILNDIFKKRDSMNWNEITQGIEHIPGKKISLTTDPAMKVDIDGEISLETPIDIEVIPNAIQLLTVNDL</sequence>
<dbReference type="EC" id="2.7.1.-"/>
<dbReference type="EMBL" id="AP009324">
    <property type="protein sequence ID" value="BAF77606.1"/>
    <property type="molecule type" value="Genomic_DNA"/>
</dbReference>
<dbReference type="RefSeq" id="WP_000429006.1">
    <property type="nucleotide sequence ID" value="NC_009782.1"/>
</dbReference>
<dbReference type="SMR" id="A7WZL3"/>
<dbReference type="KEGG" id="saw:SAHV_0723"/>
<dbReference type="HOGENOM" id="CLU_045532_1_0_9"/>
<dbReference type="GO" id="GO:0005886">
    <property type="term" value="C:plasma membrane"/>
    <property type="evidence" value="ECO:0007669"/>
    <property type="project" value="TreeGrafter"/>
</dbReference>
<dbReference type="GO" id="GO:0005524">
    <property type="term" value="F:ATP binding"/>
    <property type="evidence" value="ECO:0007669"/>
    <property type="project" value="UniProtKB-KW"/>
</dbReference>
<dbReference type="GO" id="GO:0004143">
    <property type="term" value="F:ATP-dependent diacylglycerol kinase activity"/>
    <property type="evidence" value="ECO:0007669"/>
    <property type="project" value="TreeGrafter"/>
</dbReference>
<dbReference type="GO" id="GO:0046872">
    <property type="term" value="F:metal ion binding"/>
    <property type="evidence" value="ECO:0007669"/>
    <property type="project" value="UniProtKB-KW"/>
</dbReference>
<dbReference type="GO" id="GO:0008654">
    <property type="term" value="P:phospholipid biosynthetic process"/>
    <property type="evidence" value="ECO:0007669"/>
    <property type="project" value="UniProtKB-KW"/>
</dbReference>
<dbReference type="Gene3D" id="2.60.200.40">
    <property type="match status" value="1"/>
</dbReference>
<dbReference type="Gene3D" id="3.40.50.10330">
    <property type="entry name" value="Probable inorganic polyphosphate/atp-NAD kinase, domain 1"/>
    <property type="match status" value="1"/>
</dbReference>
<dbReference type="InterPro" id="IPR017438">
    <property type="entry name" value="ATP-NAD_kinase_N"/>
</dbReference>
<dbReference type="InterPro" id="IPR005218">
    <property type="entry name" value="Diacylglycerol/lipid_kinase"/>
</dbReference>
<dbReference type="InterPro" id="IPR001206">
    <property type="entry name" value="Diacylglycerol_kinase_cat_dom"/>
</dbReference>
<dbReference type="InterPro" id="IPR050187">
    <property type="entry name" value="Lipid_Phosphate_FormReg"/>
</dbReference>
<dbReference type="InterPro" id="IPR016064">
    <property type="entry name" value="NAD/diacylglycerol_kinase_sf"/>
</dbReference>
<dbReference type="InterPro" id="IPR045540">
    <property type="entry name" value="YegS/DAGK_C"/>
</dbReference>
<dbReference type="NCBIfam" id="TIGR00147">
    <property type="entry name" value="YegS/Rv2252/BmrU family lipid kinase"/>
    <property type="match status" value="1"/>
</dbReference>
<dbReference type="PANTHER" id="PTHR12358:SF106">
    <property type="entry name" value="LIPID KINASE YEGS"/>
    <property type="match status" value="1"/>
</dbReference>
<dbReference type="PANTHER" id="PTHR12358">
    <property type="entry name" value="SPHINGOSINE KINASE"/>
    <property type="match status" value="1"/>
</dbReference>
<dbReference type="Pfam" id="PF00781">
    <property type="entry name" value="DAGK_cat"/>
    <property type="match status" value="1"/>
</dbReference>
<dbReference type="Pfam" id="PF19279">
    <property type="entry name" value="YegS_C"/>
    <property type="match status" value="1"/>
</dbReference>
<dbReference type="SMART" id="SM00046">
    <property type="entry name" value="DAGKc"/>
    <property type="match status" value="1"/>
</dbReference>
<dbReference type="SUPFAM" id="SSF111331">
    <property type="entry name" value="NAD kinase/diacylglycerol kinase-like"/>
    <property type="match status" value="1"/>
</dbReference>
<dbReference type="PROSITE" id="PS50146">
    <property type="entry name" value="DAGK"/>
    <property type="match status" value="1"/>
</dbReference>
<protein>
    <recommendedName>
        <fullName>Putative lipid kinase SAHV_0723</fullName>
        <ecNumber>2.7.1.-</ecNumber>
    </recommendedName>
</protein>
<proteinExistence type="inferred from homology"/>
<accession>A7WZL3</accession>
<comment type="function">
    <text evidence="1">May catalyze the ATP-dependent phosphorylation of lipids other than diacylglycerol (DAG).</text>
</comment>
<comment type="cofactor">
    <cofactor evidence="1">
        <name>Mg(2+)</name>
        <dbReference type="ChEBI" id="CHEBI:18420"/>
    </cofactor>
    <text evidence="1">Binds 1 Mg(2+) ion per subunit. This ion appears to have a structural role and is required for catalytic activity.</text>
</comment>
<comment type="similarity">
    <text evidence="3">Belongs to the diacylglycerol/lipid kinase family.</text>
</comment>
<name>Y723_STAA1</name>
<feature type="chain" id="PRO_0000386505" description="Putative lipid kinase SAHV_0723">
    <location>
        <begin position="1"/>
        <end position="305"/>
    </location>
</feature>
<feature type="domain" description="DAGKc" evidence="2">
    <location>
        <begin position="3"/>
        <end position="139"/>
    </location>
</feature>
<feature type="active site" description="Proton acceptor" evidence="1">
    <location>
        <position position="281"/>
    </location>
</feature>
<feature type="binding site" evidence="2">
    <location>
        <position position="44"/>
    </location>
    <ligand>
        <name>ATP</name>
        <dbReference type="ChEBI" id="CHEBI:30616"/>
    </ligand>
</feature>
<feature type="binding site" evidence="2">
    <location>
        <begin position="74"/>
        <end position="80"/>
    </location>
    <ligand>
        <name>ATP</name>
        <dbReference type="ChEBI" id="CHEBI:30616"/>
    </ligand>
</feature>
<feature type="binding site" evidence="2">
    <location>
        <position position="101"/>
    </location>
    <ligand>
        <name>ATP</name>
        <dbReference type="ChEBI" id="CHEBI:30616"/>
    </ligand>
</feature>
<feature type="binding site" evidence="1">
    <location>
        <position position="220"/>
    </location>
    <ligand>
        <name>Mg(2+)</name>
        <dbReference type="ChEBI" id="CHEBI:18420"/>
    </ligand>
</feature>
<feature type="binding site" evidence="1">
    <location>
        <position position="223"/>
    </location>
    <ligand>
        <name>Mg(2+)</name>
        <dbReference type="ChEBI" id="CHEBI:18420"/>
    </ligand>
</feature>
<feature type="binding site" evidence="1">
    <location>
        <position position="225"/>
    </location>
    <ligand>
        <name>Mg(2+)</name>
        <dbReference type="ChEBI" id="CHEBI:18420"/>
    </ligand>
</feature>